<accession>P0C822</accession>
<accession>B9ZUX4</accession>
<organism>
    <name type="scientific">Staphylococcus aureus (strain Newman)</name>
    <dbReference type="NCBI Taxonomy" id="426430"/>
    <lineage>
        <taxon>Bacteria</taxon>
        <taxon>Bacillati</taxon>
        <taxon>Bacillota</taxon>
        <taxon>Bacilli</taxon>
        <taxon>Bacillales</taxon>
        <taxon>Staphylococcaceae</taxon>
        <taxon>Staphylococcus</taxon>
    </lineage>
</organism>
<dbReference type="EMBL" id="AP009351">
    <property type="protein sequence ID" value="BAH22632.1"/>
    <property type="molecule type" value="Genomic_DNA"/>
</dbReference>
<dbReference type="SMR" id="P0C822"/>
<dbReference type="KEGG" id="sae:NWMN_2616"/>
<dbReference type="HOGENOM" id="CLU_221892_0_0_9"/>
<dbReference type="Proteomes" id="UP000006386">
    <property type="component" value="Chromosome"/>
</dbReference>
<dbReference type="GO" id="GO:0031640">
    <property type="term" value="P:killing of cells of another organism"/>
    <property type="evidence" value="ECO:0007669"/>
    <property type="project" value="UniProtKB-KW"/>
</dbReference>
<dbReference type="InterPro" id="IPR031429">
    <property type="entry name" value="PSM_alpha"/>
</dbReference>
<dbReference type="Pfam" id="PF17063">
    <property type="entry name" value="PSMalpha"/>
    <property type="match status" value="1"/>
</dbReference>
<evidence type="ECO:0000250" key="1">
    <source>
        <dbReference type="UniProtKB" id="A9JX08"/>
    </source>
</evidence>
<evidence type="ECO:0000305" key="2"/>
<proteinExistence type="inferred from homology"/>
<comment type="function">
    <text evidence="1">Peptide which can recruit, activate and subsequently lyse human neutrophils, thus eliminating the main cellular defense against infection.</text>
</comment>
<comment type="similarity">
    <text evidence="2">Belongs to the phenol-soluble modulin alpha peptides family.</text>
</comment>
<sequence length="20" mass="2172">MAIVGTIIKIIKAIIDIFAK</sequence>
<protein>
    <recommendedName>
        <fullName>Phenol-soluble modulin alpha 4 peptide</fullName>
    </recommendedName>
</protein>
<reference key="1">
    <citation type="journal article" date="2008" name="J. Bacteriol.">
        <title>Genome sequence of Staphylococcus aureus strain Newman and comparative analysis of staphylococcal genomes: polymorphism and evolution of two major pathogenicity islands.</title>
        <authorList>
            <person name="Baba T."/>
            <person name="Bae T."/>
            <person name="Schneewind O."/>
            <person name="Takeuchi F."/>
            <person name="Hiramatsu K."/>
        </authorList>
    </citation>
    <scope>NUCLEOTIDE SEQUENCE [LARGE SCALE GENOMIC DNA]</scope>
    <source>
        <strain>Newman</strain>
    </source>
</reference>
<gene>
    <name type="primary">psmA4</name>
    <name type="ordered locus">NWMN_0417.1</name>
    <name type="ORF">NWMN_2616</name>
</gene>
<feature type="peptide" id="PRO_0000345078" description="Phenol-soluble modulin alpha 4 peptide">
    <location>
        <begin position="1"/>
        <end position="20"/>
    </location>
</feature>
<name>PSMA4_STAAE</name>
<keyword id="KW-0204">Cytolysis</keyword>
<keyword id="KW-0843">Virulence</keyword>